<dbReference type="EMBL" id="CP001186">
    <property type="protein sequence ID" value="ACK96747.1"/>
    <property type="molecule type" value="Genomic_DNA"/>
</dbReference>
<dbReference type="RefSeq" id="WP_000864237.1">
    <property type="nucleotide sequence ID" value="NC_011772.1"/>
</dbReference>
<dbReference type="SMR" id="B7IS13"/>
<dbReference type="KEGG" id="bcg:BCG9842_B5339"/>
<dbReference type="HOGENOM" id="CLU_078938_3_2_9"/>
<dbReference type="Proteomes" id="UP000006744">
    <property type="component" value="Chromosome"/>
</dbReference>
<dbReference type="GO" id="GO:1990904">
    <property type="term" value="C:ribonucleoprotein complex"/>
    <property type="evidence" value="ECO:0007669"/>
    <property type="project" value="UniProtKB-KW"/>
</dbReference>
<dbReference type="GO" id="GO:0005840">
    <property type="term" value="C:ribosome"/>
    <property type="evidence" value="ECO:0007669"/>
    <property type="project" value="UniProtKB-KW"/>
</dbReference>
<dbReference type="GO" id="GO:0019843">
    <property type="term" value="F:rRNA binding"/>
    <property type="evidence" value="ECO:0007669"/>
    <property type="project" value="UniProtKB-UniRule"/>
</dbReference>
<dbReference type="GO" id="GO:0003735">
    <property type="term" value="F:structural constituent of ribosome"/>
    <property type="evidence" value="ECO:0007669"/>
    <property type="project" value="InterPro"/>
</dbReference>
<dbReference type="GO" id="GO:0006412">
    <property type="term" value="P:translation"/>
    <property type="evidence" value="ECO:0007669"/>
    <property type="project" value="UniProtKB-UniRule"/>
</dbReference>
<dbReference type="FunFam" id="3.10.430.100:FF:000002">
    <property type="entry name" value="50S ribosomal protein L9"/>
    <property type="match status" value="1"/>
</dbReference>
<dbReference type="FunFam" id="3.40.5.10:FF:000002">
    <property type="entry name" value="50S ribosomal protein L9"/>
    <property type="match status" value="1"/>
</dbReference>
<dbReference type="Gene3D" id="3.10.430.100">
    <property type="entry name" value="Ribosomal protein L9, C-terminal domain"/>
    <property type="match status" value="1"/>
</dbReference>
<dbReference type="Gene3D" id="3.40.5.10">
    <property type="entry name" value="Ribosomal protein L9, N-terminal domain"/>
    <property type="match status" value="1"/>
</dbReference>
<dbReference type="HAMAP" id="MF_00503">
    <property type="entry name" value="Ribosomal_bL9"/>
    <property type="match status" value="1"/>
</dbReference>
<dbReference type="InterPro" id="IPR000244">
    <property type="entry name" value="Ribosomal_bL9"/>
</dbReference>
<dbReference type="InterPro" id="IPR009027">
    <property type="entry name" value="Ribosomal_bL9/RNase_H1_N"/>
</dbReference>
<dbReference type="InterPro" id="IPR020594">
    <property type="entry name" value="Ribosomal_bL9_bac/chp"/>
</dbReference>
<dbReference type="InterPro" id="IPR020069">
    <property type="entry name" value="Ribosomal_bL9_C"/>
</dbReference>
<dbReference type="InterPro" id="IPR036791">
    <property type="entry name" value="Ribosomal_bL9_C_sf"/>
</dbReference>
<dbReference type="InterPro" id="IPR020070">
    <property type="entry name" value="Ribosomal_bL9_N"/>
</dbReference>
<dbReference type="InterPro" id="IPR036935">
    <property type="entry name" value="Ribosomal_bL9_N_sf"/>
</dbReference>
<dbReference type="NCBIfam" id="TIGR00158">
    <property type="entry name" value="L9"/>
    <property type="match status" value="1"/>
</dbReference>
<dbReference type="PANTHER" id="PTHR21368">
    <property type="entry name" value="50S RIBOSOMAL PROTEIN L9"/>
    <property type="match status" value="1"/>
</dbReference>
<dbReference type="Pfam" id="PF03948">
    <property type="entry name" value="Ribosomal_L9_C"/>
    <property type="match status" value="1"/>
</dbReference>
<dbReference type="Pfam" id="PF01281">
    <property type="entry name" value="Ribosomal_L9_N"/>
    <property type="match status" value="1"/>
</dbReference>
<dbReference type="SUPFAM" id="SSF55658">
    <property type="entry name" value="L9 N-domain-like"/>
    <property type="match status" value="1"/>
</dbReference>
<dbReference type="SUPFAM" id="SSF55653">
    <property type="entry name" value="Ribosomal protein L9 C-domain"/>
    <property type="match status" value="1"/>
</dbReference>
<dbReference type="PROSITE" id="PS00651">
    <property type="entry name" value="RIBOSOMAL_L9"/>
    <property type="match status" value="1"/>
</dbReference>
<keyword id="KW-0687">Ribonucleoprotein</keyword>
<keyword id="KW-0689">Ribosomal protein</keyword>
<keyword id="KW-0694">RNA-binding</keyword>
<keyword id="KW-0699">rRNA-binding</keyword>
<name>RL9_BACC2</name>
<accession>B7IS13</accession>
<proteinExistence type="inferred from homology"/>
<sequence>MKVIFLKDVKGKGKKGEVKNVPDGYANNFLLKQGLAAEATNSSMKTLEAQKRKEEKDAAAEVENAKELKETLEKLTVEVKAKSGEGGRLFGSITSKQIVDAMQKSHKIKLDKRKFEMDDAIRALGYTNVTVKLHPQVTATVKVHVSEQ</sequence>
<protein>
    <recommendedName>
        <fullName evidence="1">Large ribosomal subunit protein bL9</fullName>
    </recommendedName>
    <alternativeName>
        <fullName evidence="2">50S ribosomal protein L9</fullName>
    </alternativeName>
</protein>
<organism>
    <name type="scientific">Bacillus cereus (strain G9842)</name>
    <dbReference type="NCBI Taxonomy" id="405531"/>
    <lineage>
        <taxon>Bacteria</taxon>
        <taxon>Bacillati</taxon>
        <taxon>Bacillota</taxon>
        <taxon>Bacilli</taxon>
        <taxon>Bacillales</taxon>
        <taxon>Bacillaceae</taxon>
        <taxon>Bacillus</taxon>
        <taxon>Bacillus cereus group</taxon>
    </lineage>
</organism>
<reference key="1">
    <citation type="submission" date="2008-10" db="EMBL/GenBank/DDBJ databases">
        <title>Genome sequence of Bacillus cereus G9842.</title>
        <authorList>
            <person name="Dodson R.J."/>
            <person name="Durkin A.S."/>
            <person name="Rosovitz M.J."/>
            <person name="Rasko D.A."/>
            <person name="Hoffmaster A."/>
            <person name="Ravel J."/>
            <person name="Sutton G."/>
        </authorList>
    </citation>
    <scope>NUCLEOTIDE SEQUENCE [LARGE SCALE GENOMIC DNA]</scope>
    <source>
        <strain>G9842</strain>
    </source>
</reference>
<gene>
    <name evidence="1" type="primary">rplI</name>
    <name type="ordered locus">BCG9842_B5339</name>
</gene>
<evidence type="ECO:0000255" key="1">
    <source>
        <dbReference type="HAMAP-Rule" id="MF_00503"/>
    </source>
</evidence>
<evidence type="ECO:0000305" key="2"/>
<comment type="function">
    <text evidence="1">Binds to the 23S rRNA.</text>
</comment>
<comment type="similarity">
    <text evidence="1">Belongs to the bacterial ribosomal protein bL9 family.</text>
</comment>
<feature type="chain" id="PRO_1000126865" description="Large ribosomal subunit protein bL9">
    <location>
        <begin position="1"/>
        <end position="148"/>
    </location>
</feature>